<protein>
    <recommendedName>
        <fullName evidence="1">Orotate phosphoribosyltransferase</fullName>
        <shortName evidence="1">OPRT</shortName>
        <shortName evidence="1">OPRTase</shortName>
        <ecNumber evidence="1">2.4.2.10</ecNumber>
    </recommendedName>
</protein>
<name>PYRE_PASMU</name>
<organism>
    <name type="scientific">Pasteurella multocida (strain Pm70)</name>
    <dbReference type="NCBI Taxonomy" id="272843"/>
    <lineage>
        <taxon>Bacteria</taxon>
        <taxon>Pseudomonadati</taxon>
        <taxon>Pseudomonadota</taxon>
        <taxon>Gammaproteobacteria</taxon>
        <taxon>Pasteurellales</taxon>
        <taxon>Pasteurellaceae</taxon>
        <taxon>Pasteurella</taxon>
    </lineage>
</organism>
<reference key="1">
    <citation type="journal article" date="2001" name="Proc. Natl. Acad. Sci. U.S.A.">
        <title>Complete genomic sequence of Pasteurella multocida Pm70.</title>
        <authorList>
            <person name="May B.J."/>
            <person name="Zhang Q."/>
            <person name="Li L.L."/>
            <person name="Paustian M.L."/>
            <person name="Whittam T.S."/>
            <person name="Kapur V."/>
        </authorList>
    </citation>
    <scope>NUCLEOTIDE SEQUENCE [LARGE SCALE GENOMIC DNA]</scope>
    <source>
        <strain>Pm70</strain>
    </source>
</reference>
<proteinExistence type="inferred from homology"/>
<feature type="chain" id="PRO_0000110718" description="Orotate phosphoribosyltransferase">
    <location>
        <begin position="1"/>
        <end position="214"/>
    </location>
</feature>
<feature type="binding site" description="in other chain" evidence="1">
    <location>
        <position position="26"/>
    </location>
    <ligand>
        <name>5-phospho-alpha-D-ribose 1-diphosphate</name>
        <dbReference type="ChEBI" id="CHEBI:58017"/>
        <note>ligand shared between dimeric partners</note>
    </ligand>
</feature>
<feature type="binding site" evidence="1">
    <location>
        <begin position="34"/>
        <end position="35"/>
    </location>
    <ligand>
        <name>orotate</name>
        <dbReference type="ChEBI" id="CHEBI:30839"/>
    </ligand>
</feature>
<feature type="binding site" description="in other chain" evidence="1">
    <location>
        <begin position="72"/>
        <end position="73"/>
    </location>
    <ligand>
        <name>5-phospho-alpha-D-ribose 1-diphosphate</name>
        <dbReference type="ChEBI" id="CHEBI:58017"/>
        <note>ligand shared between dimeric partners</note>
    </ligand>
</feature>
<feature type="binding site" evidence="1">
    <location>
        <position position="99"/>
    </location>
    <ligand>
        <name>5-phospho-alpha-D-ribose 1-diphosphate</name>
        <dbReference type="ChEBI" id="CHEBI:58017"/>
        <note>ligand shared between dimeric partners</note>
    </ligand>
</feature>
<feature type="binding site" description="in other chain" evidence="1">
    <location>
        <position position="100"/>
    </location>
    <ligand>
        <name>5-phospho-alpha-D-ribose 1-diphosphate</name>
        <dbReference type="ChEBI" id="CHEBI:58017"/>
        <note>ligand shared between dimeric partners</note>
    </ligand>
</feature>
<feature type="binding site" evidence="1">
    <location>
        <position position="103"/>
    </location>
    <ligand>
        <name>5-phospho-alpha-D-ribose 1-diphosphate</name>
        <dbReference type="ChEBI" id="CHEBI:58017"/>
        <note>ligand shared between dimeric partners</note>
    </ligand>
</feature>
<feature type="binding site" evidence="1">
    <location>
        <position position="105"/>
    </location>
    <ligand>
        <name>5-phospho-alpha-D-ribose 1-diphosphate</name>
        <dbReference type="ChEBI" id="CHEBI:58017"/>
        <note>ligand shared between dimeric partners</note>
    </ligand>
</feature>
<feature type="binding site" description="in other chain" evidence="1">
    <location>
        <begin position="124"/>
        <end position="132"/>
    </location>
    <ligand>
        <name>5-phospho-alpha-D-ribose 1-diphosphate</name>
        <dbReference type="ChEBI" id="CHEBI:58017"/>
        <note>ligand shared between dimeric partners</note>
    </ligand>
</feature>
<feature type="binding site" evidence="1">
    <location>
        <position position="128"/>
    </location>
    <ligand>
        <name>orotate</name>
        <dbReference type="ChEBI" id="CHEBI:30839"/>
    </ligand>
</feature>
<feature type="binding site" evidence="1">
    <location>
        <position position="156"/>
    </location>
    <ligand>
        <name>orotate</name>
        <dbReference type="ChEBI" id="CHEBI:30839"/>
    </ligand>
</feature>
<evidence type="ECO:0000255" key="1">
    <source>
        <dbReference type="HAMAP-Rule" id="MF_01208"/>
    </source>
</evidence>
<gene>
    <name evidence="1" type="primary">pyrE</name>
    <name type="ordered locus">PM1877</name>
</gene>
<sequence length="214" mass="23852">MEAYKSEFIQFALSRQVLKFGEFTLKSGRISPYFFNAGLFNTGADLARLGEFYAKAIQASGVEYDVIFGPAYKGLPIATTVSVALFNHFQIDKPVCFNRKEAKDHGEGGQLIGYGLSGKILLVDDVITAGTAIRESMTLIAQNQAELSAVMIALNRQEKGKGELSAIQEVERDYQCQVLSIVNFDDLMTFIEQAPEYQQYLPAMRAYREQYGVK</sequence>
<comment type="function">
    <text evidence="1">Catalyzes the transfer of a ribosyl phosphate group from 5-phosphoribose 1-diphosphate to orotate, leading to the formation of orotidine monophosphate (OMP).</text>
</comment>
<comment type="catalytic activity">
    <reaction evidence="1">
        <text>orotidine 5'-phosphate + diphosphate = orotate + 5-phospho-alpha-D-ribose 1-diphosphate</text>
        <dbReference type="Rhea" id="RHEA:10380"/>
        <dbReference type="ChEBI" id="CHEBI:30839"/>
        <dbReference type="ChEBI" id="CHEBI:33019"/>
        <dbReference type="ChEBI" id="CHEBI:57538"/>
        <dbReference type="ChEBI" id="CHEBI:58017"/>
        <dbReference type="EC" id="2.4.2.10"/>
    </reaction>
</comment>
<comment type="cofactor">
    <cofactor evidence="1">
        <name>Mg(2+)</name>
        <dbReference type="ChEBI" id="CHEBI:18420"/>
    </cofactor>
</comment>
<comment type="pathway">
    <text evidence="1">Pyrimidine metabolism; UMP biosynthesis via de novo pathway; UMP from orotate: step 1/2.</text>
</comment>
<comment type="subunit">
    <text evidence="1">Homodimer.</text>
</comment>
<comment type="similarity">
    <text evidence="1">Belongs to the purine/pyrimidine phosphoribosyltransferase family. PyrE subfamily.</text>
</comment>
<keyword id="KW-0328">Glycosyltransferase</keyword>
<keyword id="KW-0460">Magnesium</keyword>
<keyword id="KW-0665">Pyrimidine biosynthesis</keyword>
<keyword id="KW-1185">Reference proteome</keyword>
<keyword id="KW-0808">Transferase</keyword>
<dbReference type="EC" id="2.4.2.10" evidence="1"/>
<dbReference type="EMBL" id="AE004439">
    <property type="protein sequence ID" value="AAK03961.1"/>
    <property type="molecule type" value="Genomic_DNA"/>
</dbReference>
<dbReference type="RefSeq" id="WP_005719325.1">
    <property type="nucleotide sequence ID" value="NC_002663.1"/>
</dbReference>
<dbReference type="SMR" id="Q9CJW4"/>
<dbReference type="STRING" id="272843.PM1877"/>
<dbReference type="EnsemblBacteria" id="AAK03961">
    <property type="protein sequence ID" value="AAK03961"/>
    <property type="gene ID" value="PM1877"/>
</dbReference>
<dbReference type="GeneID" id="77207221"/>
<dbReference type="KEGG" id="pmu:PM1877"/>
<dbReference type="HOGENOM" id="CLU_074878_0_1_6"/>
<dbReference type="OrthoDB" id="9779060at2"/>
<dbReference type="UniPathway" id="UPA00070">
    <property type="reaction ID" value="UER00119"/>
</dbReference>
<dbReference type="Proteomes" id="UP000000809">
    <property type="component" value="Chromosome"/>
</dbReference>
<dbReference type="GO" id="GO:0005737">
    <property type="term" value="C:cytoplasm"/>
    <property type="evidence" value="ECO:0007669"/>
    <property type="project" value="TreeGrafter"/>
</dbReference>
<dbReference type="GO" id="GO:0000287">
    <property type="term" value="F:magnesium ion binding"/>
    <property type="evidence" value="ECO:0007669"/>
    <property type="project" value="UniProtKB-UniRule"/>
</dbReference>
<dbReference type="GO" id="GO:0004588">
    <property type="term" value="F:orotate phosphoribosyltransferase activity"/>
    <property type="evidence" value="ECO:0007669"/>
    <property type="project" value="UniProtKB-UniRule"/>
</dbReference>
<dbReference type="GO" id="GO:0006207">
    <property type="term" value="P:'de novo' pyrimidine nucleobase biosynthetic process"/>
    <property type="evidence" value="ECO:0007669"/>
    <property type="project" value="TreeGrafter"/>
</dbReference>
<dbReference type="GO" id="GO:0044205">
    <property type="term" value="P:'de novo' UMP biosynthetic process"/>
    <property type="evidence" value="ECO:0007669"/>
    <property type="project" value="UniProtKB-UniRule"/>
</dbReference>
<dbReference type="GO" id="GO:0046132">
    <property type="term" value="P:pyrimidine ribonucleoside biosynthetic process"/>
    <property type="evidence" value="ECO:0007669"/>
    <property type="project" value="TreeGrafter"/>
</dbReference>
<dbReference type="CDD" id="cd06223">
    <property type="entry name" value="PRTases_typeI"/>
    <property type="match status" value="1"/>
</dbReference>
<dbReference type="FunFam" id="3.40.50.2020:FF:000008">
    <property type="entry name" value="Orotate phosphoribosyltransferase"/>
    <property type="match status" value="1"/>
</dbReference>
<dbReference type="Gene3D" id="3.40.50.2020">
    <property type="match status" value="1"/>
</dbReference>
<dbReference type="HAMAP" id="MF_01208">
    <property type="entry name" value="PyrE"/>
    <property type="match status" value="1"/>
</dbReference>
<dbReference type="InterPro" id="IPR023031">
    <property type="entry name" value="OPRT"/>
</dbReference>
<dbReference type="InterPro" id="IPR004467">
    <property type="entry name" value="Or_phspho_trans_dom"/>
</dbReference>
<dbReference type="InterPro" id="IPR000836">
    <property type="entry name" value="PRibTrfase_dom"/>
</dbReference>
<dbReference type="InterPro" id="IPR029057">
    <property type="entry name" value="PRTase-like"/>
</dbReference>
<dbReference type="NCBIfam" id="TIGR00336">
    <property type="entry name" value="pyrE"/>
    <property type="match status" value="1"/>
</dbReference>
<dbReference type="PANTHER" id="PTHR46683">
    <property type="entry name" value="OROTATE PHOSPHORIBOSYLTRANSFERASE 1-RELATED"/>
    <property type="match status" value="1"/>
</dbReference>
<dbReference type="PANTHER" id="PTHR46683:SF1">
    <property type="entry name" value="OROTATE PHOSPHORIBOSYLTRANSFERASE 1-RELATED"/>
    <property type="match status" value="1"/>
</dbReference>
<dbReference type="Pfam" id="PF00156">
    <property type="entry name" value="Pribosyltran"/>
    <property type="match status" value="1"/>
</dbReference>
<dbReference type="SUPFAM" id="SSF53271">
    <property type="entry name" value="PRTase-like"/>
    <property type="match status" value="1"/>
</dbReference>
<dbReference type="PROSITE" id="PS00103">
    <property type="entry name" value="PUR_PYR_PR_TRANSFER"/>
    <property type="match status" value="1"/>
</dbReference>
<accession>Q9CJW4</accession>